<gene>
    <name evidence="1" type="primary">MDM10</name>
    <name type="ordered locus">AEL335C</name>
</gene>
<sequence>MIEYMEYVLRQFERTTSWDRDYSYENITATSDNLLQFEIPDSLNLQISNQSTPNTFNTFELSNRSIINGSLSYLYTDCGQLDKIVQNSLKVPLQQRVDTYQCLRPGRTLGTSFRSQMLLYGRMYWPGSILEAMYCKRLTPQSQLVLKSLLSAAGESSILTLYWQRNAPWGSQDIVFSTNELLLGYRFLHNLSPGRSHEGSPHGQSTLSLGAEFWLGISNLLPGCSTALRYCTHATNTGKPITLTLSLNPLFGHISSSYSVKFSPGTTFCSKYDFNVYSIESNLSFGCEFWKSSAAAHKQATNEEETSIEVATETPVSDPRYCGAVPGARSFDQIRPFAELPSDNQLYHQLMMPNSSNALIDNVNLPFPSPLLRYPPEKSVTDKFAAMIDATQFTSVLKMSSSLRDKNLRLLWEGKYKGFLVSAGAELTTIPLEAPKTINEITAQQVPRPLWLRPAKFGIQIQYST</sequence>
<organism>
    <name type="scientific">Eremothecium gossypii (strain ATCC 10895 / CBS 109.51 / FGSC 9923 / NRRL Y-1056)</name>
    <name type="common">Yeast</name>
    <name type="synonym">Ashbya gossypii</name>
    <dbReference type="NCBI Taxonomy" id="284811"/>
    <lineage>
        <taxon>Eukaryota</taxon>
        <taxon>Fungi</taxon>
        <taxon>Dikarya</taxon>
        <taxon>Ascomycota</taxon>
        <taxon>Saccharomycotina</taxon>
        <taxon>Saccharomycetes</taxon>
        <taxon>Saccharomycetales</taxon>
        <taxon>Saccharomycetaceae</taxon>
        <taxon>Eremothecium</taxon>
    </lineage>
</organism>
<comment type="function">
    <text evidence="1">Component of the ERMES/MDM complex, which serves as a molecular tether to connect the endoplasmic reticulum and mitochondria. Components of this complex are involved in the control of mitochondrial shape and protein biogenesis and may function in phospholipid exchange. MDM10 is involved in the late assembly steps of the general translocase of the mitochondrial outer membrane (TOM complex). Functions in the TOM40-specific route of the assembly of outer membrane beta-barrel proteins, including the association of TOM40 with the receptor TOM22 and small TOM proteins. Can associate with the SAM(core) complex as well as the MDM12-MMM1 complex, both involved in late steps of the major beta-barrel assembly pathway, that is responsible for biogenesis of all outer membrane beta-barrel proteins. May act as a switch that shuttles between both complexes and channels precursor proteins into the TOM40-specific pathway. Plays a role in mitochondrial morphology and in the inheritance of mitochondria.</text>
</comment>
<comment type="subunit">
    <text evidence="1">Component of the ER-mitochondria encounter structure (ERMES) or MDM complex, composed of MMM1, MDM10, MDM12 and MDM34. Associates with the mitochondrial outer membrane sorting assembly machinery SAM(core) complex.</text>
</comment>
<comment type="subcellular location">
    <subcellularLocation>
        <location evidence="1">Mitochondrion outer membrane</location>
        <topology evidence="1">Multi-pass membrane protein</topology>
    </subcellularLocation>
    <text evidence="1">The ERMES/MDM complex localizes to a few discrete foci (around 10 per single cell), that represent mitochondria-endoplasmic reticulum junctions. These foci are often found next to mtDNA nucleoids.</text>
</comment>
<comment type="domain">
    <text>Lacks alpha-helical transmembrane segments, suggesting that it resides in the membrane via beta-sheet conformations similar to those predicted for other outer membrane proteins and porin.</text>
</comment>
<comment type="similarity">
    <text evidence="1">Belongs to the MDM10 family.</text>
</comment>
<dbReference type="EMBL" id="AE016818">
    <property type="protein sequence ID" value="AAS52349.2"/>
    <property type="molecule type" value="Genomic_DNA"/>
</dbReference>
<dbReference type="RefSeq" id="NP_984525.2">
    <property type="nucleotide sequence ID" value="NM_209878.2"/>
</dbReference>
<dbReference type="SMR" id="Q758T7"/>
<dbReference type="FunCoup" id="Q758T7">
    <property type="interactions" value="85"/>
</dbReference>
<dbReference type="STRING" id="284811.Q758T7"/>
<dbReference type="EnsemblFungi" id="AAS52349">
    <property type="protein sequence ID" value="AAS52349"/>
    <property type="gene ID" value="AGOS_AEL335C"/>
</dbReference>
<dbReference type="GeneID" id="4620695"/>
<dbReference type="KEGG" id="ago:AGOS_AEL335C"/>
<dbReference type="eggNOG" id="ENOG502QUN5">
    <property type="taxonomic scope" value="Eukaryota"/>
</dbReference>
<dbReference type="HOGENOM" id="CLU_026505_0_0_1"/>
<dbReference type="InParanoid" id="Q758T7"/>
<dbReference type="OMA" id="VPGYRQI"/>
<dbReference type="OrthoDB" id="2103793at2759"/>
<dbReference type="Proteomes" id="UP000000591">
    <property type="component" value="Chromosome V"/>
</dbReference>
<dbReference type="GO" id="GO:0032865">
    <property type="term" value="C:ERMES complex"/>
    <property type="evidence" value="ECO:0000318"/>
    <property type="project" value="GO_Central"/>
</dbReference>
<dbReference type="GO" id="GO:0001401">
    <property type="term" value="C:SAM complex"/>
    <property type="evidence" value="ECO:0000318"/>
    <property type="project" value="GO_Central"/>
</dbReference>
<dbReference type="GO" id="GO:0051654">
    <property type="term" value="P:establishment of mitochondrion localization"/>
    <property type="evidence" value="ECO:0000318"/>
    <property type="project" value="GO_Central"/>
</dbReference>
<dbReference type="GO" id="GO:0000002">
    <property type="term" value="P:mitochondrial genome maintenance"/>
    <property type="evidence" value="ECO:0007669"/>
    <property type="project" value="UniProtKB-UniRule"/>
</dbReference>
<dbReference type="GO" id="GO:0070096">
    <property type="term" value="P:mitochondrial outer membrane translocase complex assembly"/>
    <property type="evidence" value="ECO:0000318"/>
    <property type="project" value="GO_Central"/>
</dbReference>
<dbReference type="GO" id="GO:1990456">
    <property type="term" value="P:mitochondrion-endoplasmic reticulum membrane tethering"/>
    <property type="evidence" value="ECO:0000318"/>
    <property type="project" value="GO_Central"/>
</dbReference>
<dbReference type="GO" id="GO:0007031">
    <property type="term" value="P:peroxisome organization"/>
    <property type="evidence" value="ECO:0007669"/>
    <property type="project" value="EnsemblFungi"/>
</dbReference>
<dbReference type="GO" id="GO:0015914">
    <property type="term" value="P:phospholipid transport"/>
    <property type="evidence" value="ECO:0000318"/>
    <property type="project" value="GO_Central"/>
</dbReference>
<dbReference type="GO" id="GO:0045040">
    <property type="term" value="P:protein insertion into mitochondrial outer membrane"/>
    <property type="evidence" value="ECO:0000318"/>
    <property type="project" value="GO_Central"/>
</dbReference>
<dbReference type="HAMAP" id="MF_03102">
    <property type="entry name" value="Mdm10"/>
    <property type="match status" value="1"/>
</dbReference>
<dbReference type="InterPro" id="IPR027539">
    <property type="entry name" value="Mdm10"/>
</dbReference>
<dbReference type="PANTHER" id="PTHR28035">
    <property type="entry name" value="MITOCHONDRIAL DISTRIBUTION AND MORPHOLOGY PROTEIN 10"/>
    <property type="match status" value="1"/>
</dbReference>
<dbReference type="PANTHER" id="PTHR28035:SF1">
    <property type="entry name" value="MITOCHONDRIAL DISTRIBUTION AND MORPHOLOGY PROTEIN 10"/>
    <property type="match status" value="1"/>
</dbReference>
<dbReference type="Pfam" id="PF12519">
    <property type="entry name" value="MDM10"/>
    <property type="match status" value="1"/>
</dbReference>
<evidence type="ECO:0000255" key="1">
    <source>
        <dbReference type="HAMAP-Rule" id="MF_03102"/>
    </source>
</evidence>
<protein>
    <recommendedName>
        <fullName evidence="1">Mitochondrial distribution and morphology protein 10</fullName>
    </recommendedName>
    <alternativeName>
        <fullName evidence="1">Mitochondrial inheritance component MDM10</fullName>
    </alternativeName>
</protein>
<accession>Q758T7</accession>
<proteinExistence type="inferred from homology"/>
<name>MDM10_EREGS</name>
<reference key="1">
    <citation type="journal article" date="2004" name="Science">
        <title>The Ashbya gossypii genome as a tool for mapping the ancient Saccharomyces cerevisiae genome.</title>
        <authorList>
            <person name="Dietrich F.S."/>
            <person name="Voegeli S."/>
            <person name="Brachat S."/>
            <person name="Lerch A."/>
            <person name="Gates K."/>
            <person name="Steiner S."/>
            <person name="Mohr C."/>
            <person name="Poehlmann R."/>
            <person name="Luedi P."/>
            <person name="Choi S."/>
            <person name="Wing R.A."/>
            <person name="Flavier A."/>
            <person name="Gaffney T.D."/>
            <person name="Philippsen P."/>
        </authorList>
    </citation>
    <scope>NUCLEOTIDE SEQUENCE [LARGE SCALE GENOMIC DNA]</scope>
    <source>
        <strain>ATCC 10895 / CBS 109.51 / FGSC 9923 / NRRL Y-1056</strain>
    </source>
</reference>
<reference key="2">
    <citation type="journal article" date="2013" name="G3 (Bethesda)">
        <title>Genomes of Ashbya fungi isolated from insects reveal four mating-type loci, numerous translocations, lack of transposons, and distinct gene duplications.</title>
        <authorList>
            <person name="Dietrich F.S."/>
            <person name="Voegeli S."/>
            <person name="Kuo S."/>
            <person name="Philippsen P."/>
        </authorList>
    </citation>
    <scope>GENOME REANNOTATION</scope>
    <scope>SEQUENCE REVISION TO 464</scope>
    <source>
        <strain>ATCC 10895 / CBS 109.51 / FGSC 9923 / NRRL Y-1056</strain>
    </source>
</reference>
<keyword id="KW-0472">Membrane</keyword>
<keyword id="KW-0496">Mitochondrion</keyword>
<keyword id="KW-1000">Mitochondrion outer membrane</keyword>
<keyword id="KW-1185">Reference proteome</keyword>
<keyword id="KW-0812">Transmembrane</keyword>
<keyword id="KW-1134">Transmembrane beta strand</keyword>
<feature type="chain" id="PRO_0000384160" description="Mitochondrial distribution and morphology protein 10">
    <location>
        <begin position="1"/>
        <end position="465"/>
    </location>
</feature>